<organism>
    <name type="scientific">Cryptosporidium parvum</name>
    <dbReference type="NCBI Taxonomy" id="5807"/>
    <lineage>
        <taxon>Eukaryota</taxon>
        <taxon>Sar</taxon>
        <taxon>Alveolata</taxon>
        <taxon>Apicomplexa</taxon>
        <taxon>Conoidasida</taxon>
        <taxon>Coccidia</taxon>
        <taxon>Eucoccidiorida</taxon>
        <taxon>Eimeriorina</taxon>
        <taxon>Cryptosporidiidae</taxon>
        <taxon>Cryptosporidium</taxon>
    </lineage>
</organism>
<proteinExistence type="evidence at transcript level"/>
<accession>P90519</accession>
<name>EF1A_CRYPV</name>
<sequence>MGKEKTHINLVVIGHVDSGKSTTTGHLIYKLGGIDKRTIEKFEKESSEMGKGSFKYAWVLDKLKAERERGITIDIALWQFETPKYHYTVIDAPGHRDFIKNMITGTSQADVALLVVPADRFEGAFSKEGQTREHALLAFTLGVRQMIVGINKMDTCEYKQSRFDEIFNEVDGYLKKVGYNTEKIPFVAISGFVGDNMVERSDKMPWYKGKTLVEALDTMEPPKRPTDKPLRLPLQDVYKIGGVGTVPVGRVETGIIRPGMNVTFAPAGVTTEVKSVEMHHEQMPEAVPGDNVGFNVKNVSIKDIKRGFVASDAKNDPAKGCEDFTAQVIVLNHPGEIKNGYSPVVDCHTAHISCKFQTITAKMDKRSGKVLEENPKLIKSGDAALVVMQPLKPLCVEAFTDYPPLGRFAVRDMKQTVAVGVIKSVTKKEATSKKK</sequence>
<dbReference type="EMBL" id="U71180">
    <property type="protein sequence ID" value="AAC47526.1"/>
    <property type="molecule type" value="mRNA"/>
</dbReference>
<dbReference type="SMR" id="P90519"/>
<dbReference type="VEuPathDB" id="CryptoDB:cgd6_3990"/>
<dbReference type="VEuPathDB" id="CryptoDB:CPATCC_0015600"/>
<dbReference type="OMA" id="AIRDMGM"/>
<dbReference type="GO" id="GO:0005737">
    <property type="term" value="C:cytoplasm"/>
    <property type="evidence" value="ECO:0007669"/>
    <property type="project" value="UniProtKB-SubCell"/>
</dbReference>
<dbReference type="GO" id="GO:0005525">
    <property type="term" value="F:GTP binding"/>
    <property type="evidence" value="ECO:0007669"/>
    <property type="project" value="UniProtKB-KW"/>
</dbReference>
<dbReference type="GO" id="GO:0003924">
    <property type="term" value="F:GTPase activity"/>
    <property type="evidence" value="ECO:0007669"/>
    <property type="project" value="InterPro"/>
</dbReference>
<dbReference type="GO" id="GO:0003746">
    <property type="term" value="F:translation elongation factor activity"/>
    <property type="evidence" value="ECO:0007669"/>
    <property type="project" value="UniProtKB-KW"/>
</dbReference>
<dbReference type="CDD" id="cd01883">
    <property type="entry name" value="EF1_alpha"/>
    <property type="match status" value="1"/>
</dbReference>
<dbReference type="CDD" id="cd03693">
    <property type="entry name" value="EF1_alpha_II"/>
    <property type="match status" value="1"/>
</dbReference>
<dbReference type="CDD" id="cd03705">
    <property type="entry name" value="EF1_alpha_III"/>
    <property type="match status" value="1"/>
</dbReference>
<dbReference type="FunFam" id="2.40.30.10:FF:000003">
    <property type="entry name" value="Elongation factor 1-alpha"/>
    <property type="match status" value="1"/>
</dbReference>
<dbReference type="FunFam" id="2.40.30.10:FF:000005">
    <property type="entry name" value="Elongation factor 1-alpha"/>
    <property type="match status" value="1"/>
</dbReference>
<dbReference type="FunFam" id="3.40.50.300:FF:000255">
    <property type="entry name" value="Elongation factor 1-alpha"/>
    <property type="match status" value="1"/>
</dbReference>
<dbReference type="Gene3D" id="3.40.50.300">
    <property type="entry name" value="P-loop containing nucleotide triphosphate hydrolases"/>
    <property type="match status" value="1"/>
</dbReference>
<dbReference type="Gene3D" id="2.40.30.10">
    <property type="entry name" value="Translation factors"/>
    <property type="match status" value="2"/>
</dbReference>
<dbReference type="HAMAP" id="MF_00118_A">
    <property type="entry name" value="EF_Tu_A"/>
    <property type="match status" value="1"/>
</dbReference>
<dbReference type="InterPro" id="IPR004161">
    <property type="entry name" value="EFTu-like_2"/>
</dbReference>
<dbReference type="InterPro" id="IPR031157">
    <property type="entry name" value="G_TR_CS"/>
</dbReference>
<dbReference type="InterPro" id="IPR054696">
    <property type="entry name" value="GTP-eEF1A_C"/>
</dbReference>
<dbReference type="InterPro" id="IPR027417">
    <property type="entry name" value="P-loop_NTPase"/>
</dbReference>
<dbReference type="InterPro" id="IPR000795">
    <property type="entry name" value="T_Tr_GTP-bd_dom"/>
</dbReference>
<dbReference type="InterPro" id="IPR050100">
    <property type="entry name" value="TRAFAC_GTPase_members"/>
</dbReference>
<dbReference type="InterPro" id="IPR009000">
    <property type="entry name" value="Transl_B-barrel_sf"/>
</dbReference>
<dbReference type="InterPro" id="IPR009001">
    <property type="entry name" value="Transl_elong_EF1A/Init_IF2_C"/>
</dbReference>
<dbReference type="InterPro" id="IPR004539">
    <property type="entry name" value="Transl_elong_EF1A_euk/arc"/>
</dbReference>
<dbReference type="NCBIfam" id="TIGR00483">
    <property type="entry name" value="EF-1_alpha"/>
    <property type="match status" value="1"/>
</dbReference>
<dbReference type="NCBIfam" id="NF008969">
    <property type="entry name" value="PRK12317.1"/>
    <property type="match status" value="1"/>
</dbReference>
<dbReference type="PANTHER" id="PTHR23115">
    <property type="entry name" value="TRANSLATION FACTOR"/>
    <property type="match status" value="1"/>
</dbReference>
<dbReference type="Pfam" id="PF22594">
    <property type="entry name" value="GTP-eEF1A_C"/>
    <property type="match status" value="1"/>
</dbReference>
<dbReference type="Pfam" id="PF00009">
    <property type="entry name" value="GTP_EFTU"/>
    <property type="match status" value="1"/>
</dbReference>
<dbReference type="Pfam" id="PF03144">
    <property type="entry name" value="GTP_EFTU_D2"/>
    <property type="match status" value="1"/>
</dbReference>
<dbReference type="PRINTS" id="PR00315">
    <property type="entry name" value="ELONGATNFCT"/>
</dbReference>
<dbReference type="SUPFAM" id="SSF50465">
    <property type="entry name" value="EF-Tu/eEF-1alpha/eIF2-gamma C-terminal domain"/>
    <property type="match status" value="1"/>
</dbReference>
<dbReference type="SUPFAM" id="SSF52540">
    <property type="entry name" value="P-loop containing nucleoside triphosphate hydrolases"/>
    <property type="match status" value="1"/>
</dbReference>
<dbReference type="SUPFAM" id="SSF50447">
    <property type="entry name" value="Translation proteins"/>
    <property type="match status" value="1"/>
</dbReference>
<dbReference type="PROSITE" id="PS00301">
    <property type="entry name" value="G_TR_1"/>
    <property type="match status" value="1"/>
</dbReference>
<dbReference type="PROSITE" id="PS51722">
    <property type="entry name" value="G_TR_2"/>
    <property type="match status" value="1"/>
</dbReference>
<comment type="function">
    <text>This protein promotes the GTP-dependent binding of aminoacyl-tRNA to the A-site of ribosomes during protein biosynthesis.</text>
</comment>
<comment type="subcellular location">
    <subcellularLocation>
        <location>Cytoplasm</location>
    </subcellularLocation>
</comment>
<comment type="similarity">
    <text evidence="2">Belongs to the TRAFAC class translation factor GTPase superfamily. Classic translation factor GTPase family. EF-Tu/EF-1A subfamily.</text>
</comment>
<keyword id="KW-0963">Cytoplasm</keyword>
<keyword id="KW-0251">Elongation factor</keyword>
<keyword id="KW-0342">GTP-binding</keyword>
<keyword id="KW-0547">Nucleotide-binding</keyword>
<keyword id="KW-0648">Protein biosynthesis</keyword>
<reference key="1">
    <citation type="journal article" date="1997" name="Biochim. Biophys. Acta">
        <title>Isolation of the gene coding for elongation factor-1alpha in Cryptosporidium parvum.</title>
        <authorList>
            <person name="Bonafonte M.T."/>
            <person name="Priest J.W."/>
            <person name="Garmon D."/>
            <person name="Arrowood M.J."/>
            <person name="Mead J.R."/>
        </authorList>
    </citation>
    <scope>NUCLEOTIDE SEQUENCE [MRNA]</scope>
</reference>
<feature type="chain" id="PRO_0000090920" description="Elongation factor 1-alpha">
    <location>
        <begin position="1"/>
        <end position="435"/>
    </location>
</feature>
<feature type="domain" description="tr-type G">
    <location>
        <begin position="5"/>
        <end position="226"/>
    </location>
</feature>
<feature type="region of interest" description="G1" evidence="1">
    <location>
        <begin position="14"/>
        <end position="21"/>
    </location>
</feature>
<feature type="region of interest" description="G2" evidence="1">
    <location>
        <begin position="70"/>
        <end position="74"/>
    </location>
</feature>
<feature type="region of interest" description="G3" evidence="1">
    <location>
        <begin position="91"/>
        <end position="94"/>
    </location>
</feature>
<feature type="region of interest" description="G4" evidence="1">
    <location>
        <begin position="151"/>
        <end position="154"/>
    </location>
</feature>
<feature type="region of interest" description="G5" evidence="1">
    <location>
        <begin position="190"/>
        <end position="192"/>
    </location>
</feature>
<feature type="binding site" evidence="1">
    <location>
        <begin position="14"/>
        <end position="21"/>
    </location>
    <ligand>
        <name>GTP</name>
        <dbReference type="ChEBI" id="CHEBI:37565"/>
    </ligand>
</feature>
<feature type="binding site" evidence="1">
    <location>
        <begin position="91"/>
        <end position="95"/>
    </location>
    <ligand>
        <name>GTP</name>
        <dbReference type="ChEBI" id="CHEBI:37565"/>
    </ligand>
</feature>
<feature type="binding site" evidence="1">
    <location>
        <begin position="151"/>
        <end position="154"/>
    </location>
    <ligand>
        <name>GTP</name>
        <dbReference type="ChEBI" id="CHEBI:37565"/>
    </ligand>
</feature>
<protein>
    <recommendedName>
        <fullName>Elongation factor 1-alpha</fullName>
        <shortName>EF-1-alpha</shortName>
    </recommendedName>
</protein>
<evidence type="ECO:0000250" key="1"/>
<evidence type="ECO:0000305" key="2"/>